<proteinExistence type="evidence at protein level"/>
<feature type="transit peptide" description="Chloroplast" evidence="4">
    <location>
        <begin position="1"/>
        <end position="35"/>
    </location>
</feature>
<feature type="chain" id="PRO_0000452379" description="Ent-copalyl diphosphate synthase 2">
    <location>
        <begin position="36"/>
        <end position="794"/>
    </location>
</feature>
<feature type="short sequence motif" description="DXDD motif" evidence="7">
    <location>
        <begin position="369"/>
        <end position="372"/>
    </location>
</feature>
<feature type="binding site" evidence="2">
    <location>
        <position position="238"/>
    </location>
    <ligand>
        <name>substrate</name>
    </ligand>
</feature>
<feature type="binding site" evidence="1">
    <location>
        <position position="369"/>
    </location>
    <ligand>
        <name>Mg(2+)</name>
        <dbReference type="ChEBI" id="CHEBI:18420"/>
    </ligand>
</feature>
<feature type="binding site" evidence="1">
    <location>
        <position position="371"/>
    </location>
    <ligand>
        <name>Mg(2+)</name>
        <dbReference type="ChEBI" id="CHEBI:18420"/>
    </ligand>
</feature>
<feature type="binding site" evidence="2">
    <location>
        <position position="455"/>
    </location>
    <ligand>
        <name>substrate</name>
    </ligand>
</feature>
<feature type="splice variant" id="VSP_060989" description="In isoform 2.">
    <location>
        <begin position="42"/>
        <end position="48"/>
    </location>
</feature>
<feature type="splice variant" id="VSP_060990" description="In isoform 2.">
    <original>GTML</original>
    <variation>ETIQ</variation>
    <location>
        <begin position="95"/>
        <end position="98"/>
    </location>
</feature>
<feature type="sequence conflict" description="In Ref. 1; AEP03176." evidence="7" ref="1">
    <original>P</original>
    <variation>L</variation>
    <location>
        <position position="11"/>
    </location>
</feature>
<feature type="sequence conflict" description="In Ref. 1; AEP03176." evidence="7" ref="1">
    <original>K</original>
    <variation>E</variation>
    <location>
        <position position="397"/>
    </location>
</feature>
<feature type="sequence conflict" description="In Ref. 1; AEP03176." evidence="7" ref="1">
    <original>I</original>
    <variation>M</variation>
    <location>
        <position position="785"/>
    </location>
</feature>
<name>CPS2_ISOER</name>
<sequence length="794" mass="90777">MSSSSNVTSLPRLTTAGGVFPREMVRVHSSCNILRSKAKVGGINYFNPGNIKCVEVHKSRQVAVAAVKSLEYETEKPTNQDVVSEKMRVLSERIGTMLQNMNEGEISISPYDTAWVALVEDTDGRPQFPTSLEWISNNQLADGSWGDRKFVIYDRILNTLACVVALTTWNMHPHKCNRGLRFIRDNIEKLENENEELMPIGFEVVFPSLIEAAQKLGIEIPHIDSPCIKKIQAMRDFKLKRIPMELLHKKPTSLLHSLEGMQGLVWEKLLDFRSDGSFLCSPSSTAYALQHTKDELCLQYLLKAVKKFNGGVPNVYPVDMFEHLWCVDRLQRLGICRYFRAQIKEMLDYVYKYWTDKGICWARNTNVQDVDDTAMGFRLLRMHGYDVSTDVFKQFEKAGEFCCFPGQSTHAITGMYNVYRTSQIMFDGEDILADAKNYSATFLHQKRLASELVDKWIITKDLPGEVGYALDVPFFASLPRLEARFFLEQYGGDDDVWIGKTLYRMPYVNSDTYLELAKLDYKKCQAVHQLEWKSIQKWYRDCKLGEFGLGEKRLLLAYFLAASTAFEPEKKGERLAWAKTAFLVETIASQQLSHEQKREFPNEFEHGSSLNMENGGRYKTRTRLVEILSNTVSQLSFETLVAEGRDIKQQLSNTWQKWLKTWEEGGNLGEAEAQLLLQTLHLSSGLDESSFSHPKYHQLLEATCKVCNQLRLFQNRKAHDAQGGISDLVIGTTFQIEASMQELVKLVFTKSSEDLDSITKQSFFAIARSFYYTAYCDAGAINSHIYKVLFENID</sequence>
<reference key="1">
    <citation type="journal article" date="2012" name="Phytochemistry">
        <title>IeCPS2 is potentially involved in the biosynthesis of pharmacologically active Isodon diterpenoids rather than gibberellin.</title>
        <authorList>
            <person name="Li J.-L."/>
            <person name="Chen Q.-Q."/>
            <person name="Jin Q.-P."/>
            <person name="Gao J."/>
            <person name="Zhao P.-J."/>
            <person name="Lu S."/>
            <person name="Zeng Y."/>
        </authorList>
    </citation>
    <scope>NUCLEOTIDE SEQUENCE [MRNA] (ISOFORMS 1 AND 2)</scope>
    <scope>FUNCTION</scope>
    <scope>PATHWAY</scope>
    <scope>CATALYTIC ACTIVITY</scope>
    <scope>TISSUE SPECIFICITY</scope>
    <scope>DEVELOPMENTAL STAGE</scope>
</reference>
<comment type="function">
    <text evidence="5">Involved in the biosynthesis of ent-kaurene diterpenoids natural products such as oridonin, miltiradiene, eriocalyxin B and nezukol, known to exhibit antitumor, anti-inflammatory and antibacterial activities (PubMed:22284743). Catalyzes the conversion of (2E,6E,10E)-geranylgeranyl diphosphate (GGPP) to ent-copalyl diphosphate (ent-CPP) (PubMed:22284743).</text>
</comment>
<comment type="catalytic activity">
    <reaction evidence="5">
        <text>(2E,6E,10E)-geranylgeranyl diphosphate = ent-copalyl diphosphate</text>
        <dbReference type="Rhea" id="RHEA:14841"/>
        <dbReference type="ChEBI" id="CHEBI:58553"/>
        <dbReference type="ChEBI" id="CHEBI:58756"/>
        <dbReference type="EC" id="5.5.1.13"/>
    </reaction>
    <physiologicalReaction direction="left-to-right" evidence="5">
        <dbReference type="Rhea" id="RHEA:14842"/>
    </physiologicalReaction>
</comment>
<comment type="cofactor">
    <cofactor evidence="3">
        <name>Mg(2+)</name>
        <dbReference type="ChEBI" id="CHEBI:18420"/>
    </cofactor>
</comment>
<comment type="pathway">
    <text evidence="5">Secondary metabolite biosynthesis; terpenoid biosynthesis.</text>
</comment>
<comment type="subcellular location">
    <subcellularLocation>
        <location evidence="4">Plastid</location>
        <location evidence="4">Chloroplast</location>
    </subcellularLocation>
</comment>
<comment type="alternative products">
    <event type="alternative splicing"/>
    <isoform>
        <id>G3E4M4-1</id>
        <name>1</name>
        <sequence type="displayed"/>
    </isoform>
    <isoform>
        <id>G3E4M4-2</id>
        <name>2</name>
        <name>CPS2a</name>
        <sequence type="described" ref="VSP_060989 VSP_060990"/>
    </isoform>
</comment>
<comment type="tissue specificity">
    <text evidence="5">Expressed in leaves.</text>
</comment>
<comment type="developmental stage">
    <text evidence="5">Accumulates in young and mature leaves where the dominant ent-kaurane diterpenoid maoecrystal B accumulates.</text>
</comment>
<comment type="domain">
    <text evidence="7">The Asp-Xaa-Asp-Asp (DXDD) motif is important for the catalytic activity, presumably through binding to Mg(2+).</text>
</comment>
<comment type="similarity">
    <text evidence="7">Belongs to the terpene synthase family. Tpsc subfamily.</text>
</comment>
<keyword id="KW-0025">Alternative splicing</keyword>
<keyword id="KW-0150">Chloroplast</keyword>
<keyword id="KW-0413">Isomerase</keyword>
<keyword id="KW-0460">Magnesium</keyword>
<keyword id="KW-0479">Metal-binding</keyword>
<keyword id="KW-0934">Plastid</keyword>
<keyword id="KW-0809">Transit peptide</keyword>
<evidence type="ECO:0000250" key="1">
    <source>
        <dbReference type="UniProtKB" id="C7BKP9"/>
    </source>
</evidence>
<evidence type="ECO:0000250" key="2">
    <source>
        <dbReference type="UniProtKB" id="Q38802"/>
    </source>
</evidence>
<evidence type="ECO:0000250" key="3">
    <source>
        <dbReference type="UniProtKB" id="Q40577"/>
    </source>
</evidence>
<evidence type="ECO:0000255" key="4"/>
<evidence type="ECO:0000269" key="5">
    <source>
    </source>
</evidence>
<evidence type="ECO:0000303" key="6">
    <source>
    </source>
</evidence>
<evidence type="ECO:0000305" key="7"/>
<gene>
    <name evidence="6" type="primary">CPS2</name>
</gene>
<accession>G3E4M4</accession>
<accession>G3E4M5</accession>
<dbReference type="EC" id="5.5.1.13" evidence="5"/>
<dbReference type="EMBL" id="HQ455831">
    <property type="protein sequence ID" value="AEP03175.1"/>
    <property type="molecule type" value="mRNA"/>
</dbReference>
<dbReference type="EMBL" id="HQ455832">
    <property type="protein sequence ID" value="AEP03176.1"/>
    <property type="molecule type" value="mRNA"/>
</dbReference>
<dbReference type="SMR" id="G3E4M4"/>
<dbReference type="UniPathway" id="UPA00213"/>
<dbReference type="GO" id="GO:0009507">
    <property type="term" value="C:chloroplast"/>
    <property type="evidence" value="ECO:0007669"/>
    <property type="project" value="UniProtKB-SubCell"/>
</dbReference>
<dbReference type="GO" id="GO:0009905">
    <property type="term" value="F:ent-copalyl diphosphate synthase activity"/>
    <property type="evidence" value="ECO:0000314"/>
    <property type="project" value="UniProtKB"/>
</dbReference>
<dbReference type="GO" id="GO:0000287">
    <property type="term" value="F:magnesium ion binding"/>
    <property type="evidence" value="ECO:0007669"/>
    <property type="project" value="TreeGrafter"/>
</dbReference>
<dbReference type="GO" id="GO:0010333">
    <property type="term" value="F:terpene synthase activity"/>
    <property type="evidence" value="ECO:0007669"/>
    <property type="project" value="InterPro"/>
</dbReference>
<dbReference type="GO" id="GO:0009686">
    <property type="term" value="P:gibberellin biosynthetic process"/>
    <property type="evidence" value="ECO:0007669"/>
    <property type="project" value="TreeGrafter"/>
</dbReference>
<dbReference type="GO" id="GO:1901946">
    <property type="term" value="P:miltiradiene biosynthetic process"/>
    <property type="evidence" value="ECO:0000314"/>
    <property type="project" value="UniProtKB"/>
</dbReference>
<dbReference type="GO" id="GO:0016114">
    <property type="term" value="P:terpenoid biosynthetic process"/>
    <property type="evidence" value="ECO:0000314"/>
    <property type="project" value="UniProtKB"/>
</dbReference>
<dbReference type="FunFam" id="1.50.10.130:FF:000002">
    <property type="entry name" value="Ent-copalyl diphosphate synthase, chloroplastic"/>
    <property type="match status" value="1"/>
</dbReference>
<dbReference type="Gene3D" id="1.50.10.160">
    <property type="match status" value="1"/>
</dbReference>
<dbReference type="Gene3D" id="1.10.600.10">
    <property type="entry name" value="Farnesyl Diphosphate Synthase"/>
    <property type="match status" value="1"/>
</dbReference>
<dbReference type="Gene3D" id="1.50.10.130">
    <property type="entry name" value="Terpene synthase, N-terminal domain"/>
    <property type="match status" value="1"/>
</dbReference>
<dbReference type="InterPro" id="IPR008949">
    <property type="entry name" value="Isoprenoid_synthase_dom_sf"/>
</dbReference>
<dbReference type="InterPro" id="IPR001906">
    <property type="entry name" value="Terpene_synth_N"/>
</dbReference>
<dbReference type="InterPro" id="IPR036965">
    <property type="entry name" value="Terpene_synth_N_sf"/>
</dbReference>
<dbReference type="InterPro" id="IPR050148">
    <property type="entry name" value="Terpene_synthase-like"/>
</dbReference>
<dbReference type="InterPro" id="IPR008930">
    <property type="entry name" value="Terpenoid_cyclase/PrenylTrfase"/>
</dbReference>
<dbReference type="PANTHER" id="PTHR31739">
    <property type="entry name" value="ENT-COPALYL DIPHOSPHATE SYNTHASE, CHLOROPLASTIC"/>
    <property type="match status" value="1"/>
</dbReference>
<dbReference type="PANTHER" id="PTHR31739:SF4">
    <property type="entry name" value="ENT-COPALYL DIPHOSPHATE SYNTHASE, CHLOROPLASTIC"/>
    <property type="match status" value="1"/>
</dbReference>
<dbReference type="Pfam" id="PF01397">
    <property type="entry name" value="Terpene_synth"/>
    <property type="match status" value="1"/>
</dbReference>
<dbReference type="SFLD" id="SFLDG01014">
    <property type="entry name" value="Terpene_Cyclase_Like_1_N-term"/>
    <property type="match status" value="1"/>
</dbReference>
<dbReference type="SFLD" id="SFLDG01605">
    <property type="entry name" value="Terpene_Cyclase_Like_1_N-term"/>
    <property type="match status" value="1"/>
</dbReference>
<dbReference type="SUPFAM" id="SSF48239">
    <property type="entry name" value="Terpenoid cyclases/Protein prenyltransferases"/>
    <property type="match status" value="2"/>
</dbReference>
<dbReference type="SUPFAM" id="SSF48576">
    <property type="entry name" value="Terpenoid synthases"/>
    <property type="match status" value="1"/>
</dbReference>
<protein>
    <recommendedName>
        <fullName evidence="6">Ent-copalyl diphosphate synthase 2</fullName>
        <shortName evidence="6">IeCPS2</shortName>
        <ecNumber evidence="5">5.5.1.13</ecNumber>
    </recommendedName>
</protein>
<organism>
    <name type="scientific">Isodon eriocalyx</name>
    <name type="common">Plectranthus eriocalyx</name>
    <dbReference type="NCBI Taxonomy" id="662907"/>
    <lineage>
        <taxon>Eukaryota</taxon>
        <taxon>Viridiplantae</taxon>
        <taxon>Streptophyta</taxon>
        <taxon>Embryophyta</taxon>
        <taxon>Tracheophyta</taxon>
        <taxon>Spermatophyta</taxon>
        <taxon>Magnoliopsida</taxon>
        <taxon>eudicotyledons</taxon>
        <taxon>Gunneridae</taxon>
        <taxon>Pentapetalae</taxon>
        <taxon>asterids</taxon>
        <taxon>lamiids</taxon>
        <taxon>Lamiales</taxon>
        <taxon>Lamiaceae</taxon>
        <taxon>Nepetoideae</taxon>
        <taxon>Ocimeae</taxon>
        <taxon>Isodoninae</taxon>
        <taxon>Isodon</taxon>
    </lineage>
</organism>